<name>18KD_MYCLE</name>
<dbReference type="EMBL" id="M22587">
    <property type="protein sequence ID" value="AAA25343.1"/>
    <property type="molecule type" value="Genomic_DNA"/>
</dbReference>
<dbReference type="EMBL" id="M19058">
    <property type="protein sequence ID" value="AAA88229.1"/>
    <property type="molecule type" value="Genomic_DNA"/>
</dbReference>
<dbReference type="EMBL" id="AL583923">
    <property type="protein sequence ID" value="CAC30748.1"/>
    <property type="molecule type" value="Genomic_DNA"/>
</dbReference>
<dbReference type="PIR" id="A27586">
    <property type="entry name" value="A27586"/>
</dbReference>
<dbReference type="RefSeq" id="NP_302218.1">
    <property type="nucleotide sequence ID" value="NC_002677.1"/>
</dbReference>
<dbReference type="RefSeq" id="WP_010908539.1">
    <property type="nucleotide sequence ID" value="NC_002677.1"/>
</dbReference>
<dbReference type="SMR" id="P12809"/>
<dbReference type="MINT" id="P12809"/>
<dbReference type="STRING" id="272631.gene:17575642"/>
<dbReference type="KEGG" id="mle:ML1795"/>
<dbReference type="PATRIC" id="fig|272631.5.peg.3418"/>
<dbReference type="Leproma" id="ML1795"/>
<dbReference type="eggNOG" id="COG0071">
    <property type="taxonomic scope" value="Bacteria"/>
</dbReference>
<dbReference type="HOGENOM" id="CLU_046737_9_0_11"/>
<dbReference type="OrthoDB" id="5242916at2"/>
<dbReference type="Proteomes" id="UP000000806">
    <property type="component" value="Chromosome"/>
</dbReference>
<dbReference type="CDD" id="cd06464">
    <property type="entry name" value="ACD_sHsps-like"/>
    <property type="match status" value="1"/>
</dbReference>
<dbReference type="Gene3D" id="2.60.40.790">
    <property type="match status" value="1"/>
</dbReference>
<dbReference type="InterPro" id="IPR002068">
    <property type="entry name" value="A-crystallin/Hsp20_dom"/>
</dbReference>
<dbReference type="InterPro" id="IPR008978">
    <property type="entry name" value="HSP20-like_chaperone"/>
</dbReference>
<dbReference type="InterPro" id="IPR031107">
    <property type="entry name" value="Small_HSP"/>
</dbReference>
<dbReference type="PANTHER" id="PTHR11527">
    <property type="entry name" value="HEAT-SHOCK PROTEIN 20 FAMILY MEMBER"/>
    <property type="match status" value="1"/>
</dbReference>
<dbReference type="Pfam" id="PF00011">
    <property type="entry name" value="HSP20"/>
    <property type="match status" value="1"/>
</dbReference>
<dbReference type="SUPFAM" id="SSF49764">
    <property type="entry name" value="HSP20-like chaperones"/>
    <property type="match status" value="1"/>
</dbReference>
<dbReference type="PROSITE" id="PS01031">
    <property type="entry name" value="SHSP"/>
    <property type="match status" value="1"/>
</dbReference>
<protein>
    <recommendedName>
        <fullName>18 kDa antigen</fullName>
    </recommendedName>
    <alternativeName>
        <fullName>HSP 16.7</fullName>
    </alternativeName>
</protein>
<accession>P12809</accession>
<proteinExistence type="inferred from homology"/>
<comment type="function">
    <text>Not known. This protein is one of the major immune reactive proteins in mycobacteria.</text>
</comment>
<comment type="similarity">
    <text evidence="1">Belongs to the small heat shock protein (HSP20) family.</text>
</comment>
<reference key="1">
    <citation type="journal article" date="1988" name="J. Bacteriol.">
        <title>A protein antigen of Mycobacterium leprae is related to a family of small heat shock proteins.</title>
        <authorList>
            <person name="Nerland A.H."/>
            <person name="Mustafa A.S."/>
            <person name="Sweetser D."/>
            <person name="Godal T."/>
            <person name="Young R.A."/>
        </authorList>
    </citation>
    <scope>NUCLEOTIDE SEQUENCE [GENOMIC DNA]</scope>
</reference>
<reference key="2">
    <citation type="journal article" date="1988" name="J. Immunol.">
        <title>Antigenic proteins of Mycobacterium leprae. Complete sequence of the gene for the 18-kDa protein.</title>
        <authorList>
            <person name="Booth R.J."/>
            <person name="Harris D.P."/>
            <person name="Love J.M."/>
            <person name="Watson J.D."/>
        </authorList>
    </citation>
    <scope>NUCLEOTIDE SEQUENCE [GENOMIC DNA]</scope>
</reference>
<reference key="3">
    <citation type="journal article" date="2001" name="Nature">
        <title>Massive gene decay in the leprosy bacillus.</title>
        <authorList>
            <person name="Cole S.T."/>
            <person name="Eiglmeier K."/>
            <person name="Parkhill J."/>
            <person name="James K.D."/>
            <person name="Thomson N.R."/>
            <person name="Wheeler P.R."/>
            <person name="Honore N."/>
            <person name="Garnier T."/>
            <person name="Churcher C.M."/>
            <person name="Harris D.E."/>
            <person name="Mungall K.L."/>
            <person name="Basham D."/>
            <person name="Brown D."/>
            <person name="Chillingworth T."/>
            <person name="Connor R."/>
            <person name="Davies R.M."/>
            <person name="Devlin K."/>
            <person name="Duthoy S."/>
            <person name="Feltwell T."/>
            <person name="Fraser A."/>
            <person name="Hamlin N."/>
            <person name="Holroyd S."/>
            <person name="Hornsby T."/>
            <person name="Jagels K."/>
            <person name="Lacroix C."/>
            <person name="Maclean J."/>
            <person name="Moule S."/>
            <person name="Murphy L.D."/>
            <person name="Oliver K."/>
            <person name="Quail M.A."/>
            <person name="Rajandream M.A."/>
            <person name="Rutherford K.M."/>
            <person name="Rutter S."/>
            <person name="Seeger K."/>
            <person name="Simon S."/>
            <person name="Simmonds M."/>
            <person name="Skelton J."/>
            <person name="Squares R."/>
            <person name="Squares S."/>
            <person name="Stevens K."/>
            <person name="Taylor K."/>
            <person name="Whitehead S."/>
            <person name="Woodward J.R."/>
            <person name="Barrell B.G."/>
        </authorList>
    </citation>
    <scope>NUCLEOTIDE SEQUENCE [LARGE SCALE GENOMIC DNA]</scope>
    <source>
        <strain>TN</strain>
    </source>
</reference>
<sequence>MLMRTDPFRELDRFAEQVLGTSARPAVMPMDAWREGEEFVVEFDLPGIKADSLDIDIERNVVTVRAERPGVDPDREMLAAERPRGVFNRQLVLGENLDTERILASYQEGVLKLSIPVAERAKPRKISVDRGNNGHQTINKTAHEIIDA</sequence>
<evidence type="ECO:0000255" key="1">
    <source>
        <dbReference type="PROSITE-ProRule" id="PRU00285"/>
    </source>
</evidence>
<evidence type="ECO:0000305" key="2"/>
<keyword id="KW-1185">Reference proteome</keyword>
<feature type="chain" id="PRO_0000126016" description="18 kDa antigen">
    <location>
        <begin position="1"/>
        <end position="148"/>
    </location>
</feature>
<feature type="domain" description="sHSP" evidence="1">
    <location>
        <begin position="21"/>
        <end position="131"/>
    </location>
</feature>
<feature type="sequence conflict" description="In Ref. 1; AAA25343." evidence="2" ref="1">
    <original>RFAEQVLG</original>
    <variation>LRRASVS</variation>
    <location>
        <begin position="13"/>
        <end position="20"/>
    </location>
</feature>
<feature type="sequence conflict" description="In Ref. 1; AAA25343." evidence="2" ref="1">
    <original>E</original>
    <variation>Q</variation>
    <location>
        <position position="100"/>
    </location>
</feature>
<organism>
    <name type="scientific">Mycobacterium leprae (strain TN)</name>
    <dbReference type="NCBI Taxonomy" id="272631"/>
    <lineage>
        <taxon>Bacteria</taxon>
        <taxon>Bacillati</taxon>
        <taxon>Actinomycetota</taxon>
        <taxon>Actinomycetes</taxon>
        <taxon>Mycobacteriales</taxon>
        <taxon>Mycobacteriaceae</taxon>
        <taxon>Mycobacterium</taxon>
    </lineage>
</organism>
<gene>
    <name type="primary">hsp18</name>
    <name type="ordered locus">ML1795</name>
</gene>